<dbReference type="EMBL" id="CP000050">
    <property type="protein sequence ID" value="AAY49986.1"/>
    <property type="status" value="ALT_INIT"/>
    <property type="molecule type" value="Genomic_DNA"/>
</dbReference>
<dbReference type="RefSeq" id="WP_003489471.1">
    <property type="nucleotide sequence ID" value="NZ_CP155948.1"/>
</dbReference>
<dbReference type="KEGG" id="xcb:XC_2938"/>
<dbReference type="HOGENOM" id="CLU_187346_1_1_6"/>
<dbReference type="Proteomes" id="UP000000420">
    <property type="component" value="Chromosome"/>
</dbReference>
<dbReference type="GO" id="GO:0005886">
    <property type="term" value="C:plasma membrane"/>
    <property type="evidence" value="ECO:0007669"/>
    <property type="project" value="UniProtKB-SubCell"/>
</dbReference>
<dbReference type="HAMAP" id="MF_01361">
    <property type="entry name" value="UPF0391"/>
    <property type="match status" value="1"/>
</dbReference>
<dbReference type="InterPro" id="IPR009760">
    <property type="entry name" value="DUF1328"/>
</dbReference>
<dbReference type="NCBIfam" id="NF010231">
    <property type="entry name" value="PRK13682.2-1"/>
    <property type="match status" value="1"/>
</dbReference>
<dbReference type="Pfam" id="PF07043">
    <property type="entry name" value="DUF1328"/>
    <property type="match status" value="1"/>
</dbReference>
<dbReference type="PIRSF" id="PIRSF036466">
    <property type="entry name" value="UCP036466"/>
    <property type="match status" value="1"/>
</dbReference>
<protein>
    <recommendedName>
        <fullName evidence="1">UPF0391 membrane protein XC_2938</fullName>
    </recommendedName>
</protein>
<gene>
    <name type="ordered locus">XC_2938</name>
</gene>
<evidence type="ECO:0000255" key="1">
    <source>
        <dbReference type="HAMAP-Rule" id="MF_01361"/>
    </source>
</evidence>
<evidence type="ECO:0000305" key="2"/>
<feature type="chain" id="PRO_0000256801" description="UPF0391 membrane protein XC_2938">
    <location>
        <begin position="1"/>
        <end position="57"/>
    </location>
</feature>
<feature type="transmembrane region" description="Helical" evidence="1">
    <location>
        <begin position="4"/>
        <end position="24"/>
    </location>
</feature>
<feature type="transmembrane region" description="Helical" evidence="1">
    <location>
        <begin position="33"/>
        <end position="53"/>
    </location>
</feature>
<keyword id="KW-1003">Cell membrane</keyword>
<keyword id="KW-0472">Membrane</keyword>
<keyword id="KW-0812">Transmembrane</keyword>
<keyword id="KW-1133">Transmembrane helix</keyword>
<sequence length="57" mass="5882">MIKWAIIFAIIGLIAGALGFGGMAGAAMGIAKFLFWAGIIIAIVLFVLGMTIAKKVT</sequence>
<name>Y2938_XANC8</name>
<organism>
    <name type="scientific">Xanthomonas campestris pv. campestris (strain 8004)</name>
    <dbReference type="NCBI Taxonomy" id="314565"/>
    <lineage>
        <taxon>Bacteria</taxon>
        <taxon>Pseudomonadati</taxon>
        <taxon>Pseudomonadota</taxon>
        <taxon>Gammaproteobacteria</taxon>
        <taxon>Lysobacterales</taxon>
        <taxon>Lysobacteraceae</taxon>
        <taxon>Xanthomonas</taxon>
    </lineage>
</organism>
<comment type="subcellular location">
    <subcellularLocation>
        <location evidence="1">Cell membrane</location>
        <topology evidence="1">Multi-pass membrane protein</topology>
    </subcellularLocation>
</comment>
<comment type="similarity">
    <text evidence="1">Belongs to the UPF0391 family.</text>
</comment>
<comment type="sequence caution" evidence="2">
    <conflict type="erroneous initiation">
        <sequence resource="EMBL-CDS" id="AAY49986"/>
    </conflict>
</comment>
<proteinExistence type="inferred from homology"/>
<accession>Q4USI7</accession>
<reference key="1">
    <citation type="journal article" date="2005" name="Genome Res.">
        <title>Comparative and functional genomic analyses of the pathogenicity of phytopathogen Xanthomonas campestris pv. campestris.</title>
        <authorList>
            <person name="Qian W."/>
            <person name="Jia Y."/>
            <person name="Ren S.-X."/>
            <person name="He Y.-Q."/>
            <person name="Feng J.-X."/>
            <person name="Lu L.-F."/>
            <person name="Sun Q."/>
            <person name="Ying G."/>
            <person name="Tang D.-J."/>
            <person name="Tang H."/>
            <person name="Wu W."/>
            <person name="Hao P."/>
            <person name="Wang L."/>
            <person name="Jiang B.-L."/>
            <person name="Zeng S."/>
            <person name="Gu W.-Y."/>
            <person name="Lu G."/>
            <person name="Rong L."/>
            <person name="Tian Y."/>
            <person name="Yao Z."/>
            <person name="Fu G."/>
            <person name="Chen B."/>
            <person name="Fang R."/>
            <person name="Qiang B."/>
            <person name="Chen Z."/>
            <person name="Zhao G.-P."/>
            <person name="Tang J.-L."/>
            <person name="He C."/>
        </authorList>
    </citation>
    <scope>NUCLEOTIDE SEQUENCE [LARGE SCALE GENOMIC DNA]</scope>
    <source>
        <strain>8004</strain>
    </source>
</reference>